<sequence>MILIIYLTKIMGDEMTSMDMFFFLFIFLLFIYPEMMMRYRIMKRLRCIREIERQRGTRVIAMIHRQEALTFLGIPIYKFITIEDSEEILRAIRLTPEDMPIDLIIHTPGGLALASEQIALALKEHKAKTTVIIPHYAMSGGSLIALAADEIIMDKNAVMGPVDPQIGQYPAASILEAYYRKGEKVSDETLILVDISKKAIKQMEEFVYELLKDKYGDEKAKEIAKKLTSGTWTHDYPLTVSKLKELGIEVNTNVPRKVYELLELYPQPMGAKPSVYYIPVPYSKKESEKNAK</sequence>
<gene>
    <name type="ordered locus">MJ1495</name>
</gene>
<dbReference type="EMBL" id="L77117">
    <property type="protein sequence ID" value="AAB99506.1"/>
    <property type="molecule type" value="Genomic_DNA"/>
</dbReference>
<dbReference type="PIR" id="F64486">
    <property type="entry name" value="F64486"/>
</dbReference>
<dbReference type="SMR" id="Q58890"/>
<dbReference type="STRING" id="243232.MJ_1495"/>
<dbReference type="PaxDb" id="243232-MJ_1495"/>
<dbReference type="EnsemblBacteria" id="AAB99506">
    <property type="protein sequence ID" value="AAB99506"/>
    <property type="gene ID" value="MJ_1495"/>
</dbReference>
<dbReference type="KEGG" id="mja:MJ_1495"/>
<dbReference type="eggNOG" id="arCOG01911">
    <property type="taxonomic scope" value="Archaea"/>
</dbReference>
<dbReference type="HOGENOM" id="CLU_067083_0_0_2"/>
<dbReference type="InParanoid" id="Q58890"/>
<dbReference type="PhylomeDB" id="Q58890"/>
<dbReference type="Proteomes" id="UP000000805">
    <property type="component" value="Chromosome"/>
</dbReference>
<dbReference type="GO" id="GO:0016020">
    <property type="term" value="C:membrane"/>
    <property type="evidence" value="ECO:0007669"/>
    <property type="project" value="UniProtKB-SubCell"/>
</dbReference>
<dbReference type="Gene3D" id="3.90.226.10">
    <property type="entry name" value="2-enoyl-CoA Hydratase, Chain A, domain 1"/>
    <property type="match status" value="1"/>
</dbReference>
<dbReference type="InterPro" id="IPR029045">
    <property type="entry name" value="ClpP/crotonase-like_dom_sf"/>
</dbReference>
<dbReference type="InterPro" id="IPR002825">
    <property type="entry name" value="Pept_S49_ser-pept_pro"/>
</dbReference>
<dbReference type="NCBIfam" id="NF047768">
    <property type="entry name" value="Clp_like_SDH"/>
    <property type="match status" value="1"/>
</dbReference>
<dbReference type="PANTHER" id="PTHR35984">
    <property type="entry name" value="PERIPLASMIC SERINE PROTEASE"/>
    <property type="match status" value="1"/>
</dbReference>
<dbReference type="PANTHER" id="PTHR35984:SF1">
    <property type="entry name" value="PERIPLASMIC SERINE PROTEASE"/>
    <property type="match status" value="1"/>
</dbReference>
<dbReference type="Pfam" id="PF01972">
    <property type="entry name" value="SDH_protease"/>
    <property type="match status" value="1"/>
</dbReference>
<dbReference type="SUPFAM" id="SSF52096">
    <property type="entry name" value="ClpP/crotonase"/>
    <property type="match status" value="1"/>
</dbReference>
<accession>Q58890</accession>
<name>Y1495_METJA</name>
<organism>
    <name type="scientific">Methanocaldococcus jannaschii (strain ATCC 43067 / DSM 2661 / JAL-1 / JCM 10045 / NBRC 100440)</name>
    <name type="common">Methanococcus jannaschii</name>
    <dbReference type="NCBI Taxonomy" id="243232"/>
    <lineage>
        <taxon>Archaea</taxon>
        <taxon>Methanobacteriati</taxon>
        <taxon>Methanobacteriota</taxon>
        <taxon>Methanomada group</taxon>
        <taxon>Methanococci</taxon>
        <taxon>Methanococcales</taxon>
        <taxon>Methanocaldococcaceae</taxon>
        <taxon>Methanocaldococcus</taxon>
    </lineage>
</organism>
<protein>
    <recommendedName>
        <fullName>Uncharacterized protein MJ1495</fullName>
    </recommendedName>
</protein>
<comment type="subcellular location">
    <subcellularLocation>
        <location evidence="2">Membrane</location>
        <topology evidence="2">Single-pass membrane protein</topology>
    </subcellularLocation>
</comment>
<comment type="similarity">
    <text evidence="2">To M.jannaschii MJ0137.</text>
</comment>
<proteinExistence type="predicted"/>
<reference key="1">
    <citation type="journal article" date="1996" name="Science">
        <title>Complete genome sequence of the methanogenic archaeon, Methanococcus jannaschii.</title>
        <authorList>
            <person name="Bult C.J."/>
            <person name="White O."/>
            <person name="Olsen G.J."/>
            <person name="Zhou L."/>
            <person name="Fleischmann R.D."/>
            <person name="Sutton G.G."/>
            <person name="Blake J.A."/>
            <person name="FitzGerald L.M."/>
            <person name="Clayton R.A."/>
            <person name="Gocayne J.D."/>
            <person name="Kerlavage A.R."/>
            <person name="Dougherty B.A."/>
            <person name="Tomb J.-F."/>
            <person name="Adams M.D."/>
            <person name="Reich C.I."/>
            <person name="Overbeek R."/>
            <person name="Kirkness E.F."/>
            <person name="Weinstock K.G."/>
            <person name="Merrick J.M."/>
            <person name="Glodek A."/>
            <person name="Scott J.L."/>
            <person name="Geoghagen N.S.M."/>
            <person name="Weidman J.F."/>
            <person name="Fuhrmann J.L."/>
            <person name="Nguyen D."/>
            <person name="Utterback T.R."/>
            <person name="Kelley J.M."/>
            <person name="Peterson J.D."/>
            <person name="Sadow P.W."/>
            <person name="Hanna M.C."/>
            <person name="Cotton M.D."/>
            <person name="Roberts K.M."/>
            <person name="Hurst M.A."/>
            <person name="Kaine B.P."/>
            <person name="Borodovsky M."/>
            <person name="Klenk H.-P."/>
            <person name="Fraser C.M."/>
            <person name="Smith H.O."/>
            <person name="Woese C.R."/>
            <person name="Venter J.C."/>
        </authorList>
    </citation>
    <scope>NUCLEOTIDE SEQUENCE [LARGE SCALE GENOMIC DNA]</scope>
    <source>
        <strain>ATCC 43067 / DSM 2661 / JAL-1 / JCM 10045 / NBRC 100440</strain>
    </source>
</reference>
<evidence type="ECO:0000255" key="1"/>
<evidence type="ECO:0000305" key="2"/>
<keyword id="KW-0472">Membrane</keyword>
<keyword id="KW-1185">Reference proteome</keyword>
<keyword id="KW-0812">Transmembrane</keyword>
<keyword id="KW-1133">Transmembrane helix</keyword>
<feature type="chain" id="PRO_0000107378" description="Uncharacterized protein MJ1495">
    <location>
        <begin position="1"/>
        <end position="292"/>
    </location>
</feature>
<feature type="transmembrane region" description="Helical" evidence="1">
    <location>
        <begin position="17"/>
        <end position="37"/>
    </location>
</feature>